<protein>
    <recommendedName>
        <fullName evidence="10">Sesquipedalian-1</fullName>
        <shortName>Ses1</shortName>
    </recommendedName>
    <alternativeName>
        <fullName>27 kDa inositol polyphosphate phosphatase-interacting protein A</fullName>
        <shortName>IPIP27A</shortName>
    </alternativeName>
    <alternativeName>
        <fullName evidence="9">PH domain-containing endocytic trafficking adaptor 1</fullName>
    </alternativeName>
</protein>
<sequence length="249" mass="27215">MKLNERSLAFYATCDAPVDNAGFLYKKGGRHAAYHRRWFVLRGNMLFYFEDAASREPVGVIILEGCTVELVEAAEEFAFAVRFAGTRARTYVLAAESQDAMEGWVKALSRASFDYLRLVVRELEQQLAAVRGGGGMALPQPQPQSLPLPPSLPSALAPVPSLPSAPAPVPALPLPRRPSALPPKENGCAVWSTEATFRPGPEPPPPPPRRRASAPHGPLDMAPFARLHECYGQEIRALRGQWLSSRVQP</sequence>
<proteinExistence type="evidence at protein level"/>
<feature type="chain" id="PRO_0000254572" description="Sesquipedalian-1">
    <location>
        <begin position="1"/>
        <end position="249"/>
    </location>
</feature>
<feature type="domain" description="PH" evidence="2">
    <location>
        <begin position="17"/>
        <end position="113"/>
    </location>
</feature>
<feature type="region of interest" description="Disordered" evidence="3">
    <location>
        <begin position="134"/>
        <end position="159"/>
    </location>
</feature>
<feature type="region of interest" description="Disordered" evidence="3">
    <location>
        <begin position="194"/>
        <end position="219"/>
    </location>
</feature>
<feature type="short sequence motif" description="F&amp;H">
    <location>
        <begin position="223"/>
        <end position="235"/>
    </location>
</feature>
<feature type="compositionally biased region" description="Pro residues" evidence="3">
    <location>
        <begin position="140"/>
        <end position="152"/>
    </location>
</feature>
<feature type="modified residue" description="Phosphoserine" evidence="12">
    <location>
        <position position="213"/>
    </location>
</feature>
<feature type="splice variant" id="VSP_021239" description="In isoform 2." evidence="7">
    <location>
        <begin position="1"/>
        <end position="123"/>
    </location>
</feature>
<feature type="splice variant" id="VSP_044836" description="In isoform 4." evidence="8">
    <original>M</original>
    <variation>MAPGSPPGPAIATM</variation>
    <location>
        <position position="1"/>
    </location>
</feature>
<feature type="splice variant" id="VSP_021241" description="In isoform 3." evidence="8">
    <original>EGCTVELVEAAEEFAFAVRFAGTRA</original>
    <variation>VAVALWPRALSVSPWWLSQGSPDTP</variation>
    <location>
        <begin position="64"/>
        <end position="88"/>
    </location>
</feature>
<feature type="splice variant" id="VSP_021242" description="In isoform 3." evidence="8">
    <location>
        <begin position="89"/>
        <end position="249"/>
    </location>
</feature>
<feature type="splice variant" id="VSP_021240" description="In isoform 2." evidence="7">
    <original>EQQLAAVRGGGGMAL</original>
    <variation>MQKQRPREMNSLPGV</variation>
    <location>
        <begin position="124"/>
        <end position="138"/>
    </location>
</feature>
<feature type="mutagenesis site" description="Loss of OCRL-binding. Drastically reduces membrane targeting." evidence="4 5">
    <original>F</original>
    <variation>A</variation>
    <location>
        <position position="224"/>
    </location>
</feature>
<feature type="mutagenesis site" description="Loss of OCRL-binding." evidence="4 5">
    <original>H</original>
    <variation>A</variation>
    <location>
        <position position="228"/>
    </location>
</feature>
<feature type="mutagenesis site" description="Loss of OCRL-binding." evidence="5">
    <original>EI</original>
    <variation>AA</variation>
    <location>
        <begin position="234"/>
        <end position="235"/>
    </location>
</feature>
<feature type="helix" evidence="13">
    <location>
        <begin position="224"/>
        <end position="231"/>
    </location>
</feature>
<feature type="turn" evidence="13">
    <location>
        <begin position="232"/>
        <end position="234"/>
    </location>
</feature>
<dbReference type="EMBL" id="AK056918">
    <property type="protein sequence ID" value="BAB71310.1"/>
    <property type="molecule type" value="mRNA"/>
</dbReference>
<dbReference type="EMBL" id="AC005805">
    <property type="status" value="NOT_ANNOTATED_CDS"/>
    <property type="molecule type" value="Genomic_DNA"/>
</dbReference>
<dbReference type="EMBL" id="BC014091">
    <property type="protein sequence ID" value="AAH14091.1"/>
    <property type="molecule type" value="mRNA"/>
</dbReference>
<dbReference type="EMBL" id="BC034809">
    <property type="protein sequence ID" value="AAH34809.1"/>
    <property type="molecule type" value="mRNA"/>
</dbReference>
<dbReference type="EMBL" id="CX758147">
    <property type="status" value="NOT_ANNOTATED_CDS"/>
    <property type="molecule type" value="mRNA"/>
</dbReference>
<dbReference type="CCDS" id="CCDS53833.1">
    <molecule id="Q8N4B1-4"/>
</dbReference>
<dbReference type="CCDS" id="CCDS9152.1">
    <molecule id="Q8N4B1-1"/>
</dbReference>
<dbReference type="RefSeq" id="NP_001171467.1">
    <molecule id="Q8N4B1-4"/>
    <property type="nucleotide sequence ID" value="NM_001177996.3"/>
</dbReference>
<dbReference type="RefSeq" id="NP_001171468.1">
    <molecule id="Q8N4B1-1"/>
    <property type="nucleotide sequence ID" value="NM_001177997.3"/>
</dbReference>
<dbReference type="RefSeq" id="NP_653272.2">
    <molecule id="Q8N4B1-1"/>
    <property type="nucleotide sequence ID" value="NM_144671.4"/>
</dbReference>
<dbReference type="RefSeq" id="XP_006719320.1">
    <molecule id="Q8N4B1-1"/>
    <property type="nucleotide sequence ID" value="XM_006719257.4"/>
</dbReference>
<dbReference type="RefSeq" id="XP_011536278.1">
    <molecule id="Q8N4B1-1"/>
    <property type="nucleotide sequence ID" value="XM_011537976.3"/>
</dbReference>
<dbReference type="RefSeq" id="XP_016874372.1">
    <molecule id="Q8N4B1-1"/>
    <property type="nucleotide sequence ID" value="XM_017018883.2"/>
</dbReference>
<dbReference type="RefSeq" id="XP_054227187.1">
    <molecule id="Q8N4B1-1"/>
    <property type="nucleotide sequence ID" value="XM_054371212.1"/>
</dbReference>
<dbReference type="RefSeq" id="XP_054227188.1">
    <molecule id="Q8N4B1-1"/>
    <property type="nucleotide sequence ID" value="XM_054371213.1"/>
</dbReference>
<dbReference type="RefSeq" id="XP_054227189.1">
    <molecule id="Q8N4B1-1"/>
    <property type="nucleotide sequence ID" value="XM_054371214.1"/>
</dbReference>
<dbReference type="RefSeq" id="XP_054227190.1">
    <molecule id="Q8N4B1-1"/>
    <property type="nucleotide sequence ID" value="XM_054371215.1"/>
</dbReference>
<dbReference type="PDB" id="3QIS">
    <property type="method" value="X-ray"/>
    <property type="resolution" value="2.30 A"/>
    <property type="chains" value="B=223-235"/>
</dbReference>
<dbReference type="PDBsum" id="3QIS"/>
<dbReference type="SMR" id="Q8N4B1"/>
<dbReference type="BioGRID" id="126873">
    <property type="interactions" value="41"/>
</dbReference>
<dbReference type="ELM" id="Q8N4B1"/>
<dbReference type="FunCoup" id="Q8N4B1">
    <property type="interactions" value="650"/>
</dbReference>
<dbReference type="IntAct" id="Q8N4B1">
    <property type="interactions" value="34"/>
</dbReference>
<dbReference type="MINT" id="Q8N4B1"/>
<dbReference type="STRING" id="9606.ENSP00000354461"/>
<dbReference type="iPTMnet" id="Q8N4B1"/>
<dbReference type="PhosphoSitePlus" id="Q8N4B1"/>
<dbReference type="BioMuta" id="FAM109A"/>
<dbReference type="DMDM" id="74728832"/>
<dbReference type="jPOST" id="Q8N4B1"/>
<dbReference type="MassIVE" id="Q8N4B1"/>
<dbReference type="PaxDb" id="9606-ENSP00000354461"/>
<dbReference type="PeptideAtlas" id="Q8N4B1"/>
<dbReference type="ProteomicsDB" id="71901">
    <molecule id="Q8N4B1-1"/>
</dbReference>
<dbReference type="ProteomicsDB" id="71902">
    <molecule id="Q8N4B1-2"/>
</dbReference>
<dbReference type="ProteomicsDB" id="71903">
    <molecule id="Q8N4B1-3"/>
</dbReference>
<dbReference type="Antibodypedia" id="45279">
    <property type="antibodies" value="72 antibodies from 15 providers"/>
</dbReference>
<dbReference type="DNASU" id="144717"/>
<dbReference type="Ensembl" id="ENST00000361483.4">
    <molecule id="Q8N4B1-4"/>
    <property type="protein sequence ID" value="ENSP00000354461.3"/>
    <property type="gene ID" value="ENSG00000198324.14"/>
</dbReference>
<dbReference type="Ensembl" id="ENST00000547838.2">
    <molecule id="Q8N4B1-1"/>
    <property type="protein sequence ID" value="ENSP00000447353.1"/>
    <property type="gene ID" value="ENSG00000198324.14"/>
</dbReference>
<dbReference type="Ensembl" id="ENST00000548163.1">
    <molecule id="Q8N4B1-1"/>
    <property type="protein sequence ID" value="ENSP00000449994.1"/>
    <property type="gene ID" value="ENSG00000198324.14"/>
</dbReference>
<dbReference type="Ensembl" id="ENST00000683047.1">
    <molecule id="Q8N4B1-1"/>
    <property type="protein sequence ID" value="ENSP00000507123.1"/>
    <property type="gene ID" value="ENSG00000198324.14"/>
</dbReference>
<dbReference type="GeneID" id="144717"/>
<dbReference type="KEGG" id="hsa:144717"/>
<dbReference type="MANE-Select" id="ENST00000683047.1">
    <property type="protein sequence ID" value="ENSP00000507123.1"/>
    <property type="RefSeq nucleotide sequence ID" value="NM_144671.6"/>
    <property type="RefSeq protein sequence ID" value="NP_653272.2"/>
</dbReference>
<dbReference type="UCSC" id="uc021rdy.1">
    <molecule id="Q8N4B1-1"/>
    <property type="organism name" value="human"/>
</dbReference>
<dbReference type="AGR" id="HGNC:26509"/>
<dbReference type="CTD" id="144717"/>
<dbReference type="DisGeNET" id="144717"/>
<dbReference type="GeneCards" id="PHETA1"/>
<dbReference type="HGNC" id="HGNC:26509">
    <property type="gene designation" value="PHETA1"/>
</dbReference>
<dbReference type="HPA" id="ENSG00000198324">
    <property type="expression patterns" value="Low tissue specificity"/>
</dbReference>
<dbReference type="MIM" id="614239">
    <property type="type" value="gene"/>
</dbReference>
<dbReference type="neXtProt" id="NX_Q8N4B1"/>
<dbReference type="OpenTargets" id="ENSG00000198324"/>
<dbReference type="PharmGKB" id="PA143485466"/>
<dbReference type="VEuPathDB" id="HostDB:ENSG00000198324"/>
<dbReference type="eggNOG" id="ENOG502QQ94">
    <property type="taxonomic scope" value="Eukaryota"/>
</dbReference>
<dbReference type="GeneTree" id="ENSGT00940000162791"/>
<dbReference type="HOGENOM" id="CLU_060423_0_1_1"/>
<dbReference type="InParanoid" id="Q8N4B1"/>
<dbReference type="OMA" id="IVLEGCN"/>
<dbReference type="OrthoDB" id="10261837at2759"/>
<dbReference type="PAN-GO" id="Q8N4B1">
    <property type="GO annotations" value="6 GO annotations based on evolutionary models"/>
</dbReference>
<dbReference type="PhylomeDB" id="Q8N4B1"/>
<dbReference type="TreeFam" id="TF326731"/>
<dbReference type="PathwayCommons" id="Q8N4B1"/>
<dbReference type="SignaLink" id="Q8N4B1"/>
<dbReference type="BioGRID-ORCS" id="144717">
    <property type="hits" value="9 hits in 1151 CRISPR screens"/>
</dbReference>
<dbReference type="ChiTaRS" id="FAM109A">
    <property type="organism name" value="human"/>
</dbReference>
<dbReference type="EvolutionaryTrace" id="Q8N4B1"/>
<dbReference type="GenomeRNAi" id="144717"/>
<dbReference type="Pharos" id="Q8N4B1">
    <property type="development level" value="Tbio"/>
</dbReference>
<dbReference type="PRO" id="PR:Q8N4B1"/>
<dbReference type="Proteomes" id="UP000005640">
    <property type="component" value="Chromosome 12"/>
</dbReference>
<dbReference type="RNAct" id="Q8N4B1">
    <property type="molecule type" value="protein"/>
</dbReference>
<dbReference type="Bgee" id="ENSG00000198324">
    <property type="expression patterns" value="Expressed in pancreatic ductal cell and 178 other cell types or tissues"/>
</dbReference>
<dbReference type="ExpressionAtlas" id="Q8N4B1">
    <property type="expression patterns" value="baseline and differential"/>
</dbReference>
<dbReference type="GO" id="GO:0030136">
    <property type="term" value="C:clathrin-coated vesicle"/>
    <property type="evidence" value="ECO:0000314"/>
    <property type="project" value="UniProtKB"/>
</dbReference>
<dbReference type="GO" id="GO:0005829">
    <property type="term" value="C:cytosol"/>
    <property type="evidence" value="ECO:0007669"/>
    <property type="project" value="GOC"/>
</dbReference>
<dbReference type="GO" id="GO:0005769">
    <property type="term" value="C:early endosome"/>
    <property type="evidence" value="ECO:0000314"/>
    <property type="project" value="UniProtKB"/>
</dbReference>
<dbReference type="GO" id="GO:0055037">
    <property type="term" value="C:recycling endosome"/>
    <property type="evidence" value="ECO:0000314"/>
    <property type="project" value="UniProtKB"/>
</dbReference>
<dbReference type="GO" id="GO:0005802">
    <property type="term" value="C:trans-Golgi network"/>
    <property type="evidence" value="ECO:0000314"/>
    <property type="project" value="UniProtKB"/>
</dbReference>
<dbReference type="GO" id="GO:0042803">
    <property type="term" value="F:protein homodimerization activity"/>
    <property type="evidence" value="ECO:0000353"/>
    <property type="project" value="UniProtKB"/>
</dbReference>
<dbReference type="GO" id="GO:0007032">
    <property type="term" value="P:endosome organization"/>
    <property type="evidence" value="ECO:0000315"/>
    <property type="project" value="UniProtKB"/>
</dbReference>
<dbReference type="GO" id="GO:0001881">
    <property type="term" value="P:receptor recycling"/>
    <property type="evidence" value="ECO:0000315"/>
    <property type="project" value="UniProtKB"/>
</dbReference>
<dbReference type="GO" id="GO:0042147">
    <property type="term" value="P:retrograde transport, endosome to Golgi"/>
    <property type="evidence" value="ECO:0000315"/>
    <property type="project" value="UniProtKB"/>
</dbReference>
<dbReference type="CDD" id="cd13288">
    <property type="entry name" value="PH_Ses"/>
    <property type="match status" value="1"/>
</dbReference>
<dbReference type="FunFam" id="2.30.29.30:FF:000250">
    <property type="entry name" value="Sesquipedalian-1 isoform A"/>
    <property type="match status" value="1"/>
</dbReference>
<dbReference type="Gene3D" id="2.30.29.30">
    <property type="entry name" value="Pleckstrin-homology domain (PH domain)/Phosphotyrosine-binding domain (PTB)"/>
    <property type="match status" value="1"/>
</dbReference>
<dbReference type="InterPro" id="IPR045188">
    <property type="entry name" value="Boi1/Boi2-like"/>
</dbReference>
<dbReference type="InterPro" id="IPR011993">
    <property type="entry name" value="PH-like_dom_sf"/>
</dbReference>
<dbReference type="InterPro" id="IPR001849">
    <property type="entry name" value="PH_domain"/>
</dbReference>
<dbReference type="PANTHER" id="PTHR22902">
    <property type="entry name" value="SESQUIPEDALIAN"/>
    <property type="match status" value="1"/>
</dbReference>
<dbReference type="PANTHER" id="PTHR22902:SF17">
    <property type="entry name" value="SESQUIPEDALIAN-1"/>
    <property type="match status" value="1"/>
</dbReference>
<dbReference type="Pfam" id="PF00169">
    <property type="entry name" value="PH"/>
    <property type="match status" value="1"/>
</dbReference>
<dbReference type="SMART" id="SM00233">
    <property type="entry name" value="PH"/>
    <property type="match status" value="1"/>
</dbReference>
<dbReference type="SUPFAM" id="SSF50729">
    <property type="entry name" value="PH domain-like"/>
    <property type="match status" value="1"/>
</dbReference>
<dbReference type="PROSITE" id="PS50003">
    <property type="entry name" value="PH_DOMAIN"/>
    <property type="match status" value="1"/>
</dbReference>
<organism>
    <name type="scientific">Homo sapiens</name>
    <name type="common">Human</name>
    <dbReference type="NCBI Taxonomy" id="9606"/>
    <lineage>
        <taxon>Eukaryota</taxon>
        <taxon>Metazoa</taxon>
        <taxon>Chordata</taxon>
        <taxon>Craniata</taxon>
        <taxon>Vertebrata</taxon>
        <taxon>Euteleostomi</taxon>
        <taxon>Mammalia</taxon>
        <taxon>Eutheria</taxon>
        <taxon>Euarchontoglires</taxon>
        <taxon>Primates</taxon>
        <taxon>Haplorrhini</taxon>
        <taxon>Catarrhini</taxon>
        <taxon>Hominidae</taxon>
        <taxon>Homo</taxon>
    </lineage>
</organism>
<keyword id="KW-0002">3D-structure</keyword>
<keyword id="KW-0025">Alternative splicing</keyword>
<keyword id="KW-0968">Cytoplasmic vesicle</keyword>
<keyword id="KW-0967">Endosome</keyword>
<keyword id="KW-0333">Golgi apparatus</keyword>
<keyword id="KW-0597">Phosphoprotein</keyword>
<keyword id="KW-1267">Proteomics identification</keyword>
<keyword id="KW-1185">Reference proteome</keyword>
<gene>
    <name evidence="11" type="primary">PHETA1</name>
    <name evidence="11" type="synonym">FAM109A</name>
</gene>
<evidence type="ECO:0000250" key="1">
    <source>
        <dbReference type="UniProtKB" id="D3ZL52"/>
    </source>
</evidence>
<evidence type="ECO:0000255" key="2">
    <source>
        <dbReference type="PROSITE-ProRule" id="PRU00145"/>
    </source>
</evidence>
<evidence type="ECO:0000256" key="3">
    <source>
        <dbReference type="SAM" id="MobiDB-lite"/>
    </source>
</evidence>
<evidence type="ECO:0000269" key="4">
    <source>
    </source>
</evidence>
<evidence type="ECO:0000269" key="5">
    <source>
    </source>
</evidence>
<evidence type="ECO:0000269" key="6">
    <source>
    </source>
</evidence>
<evidence type="ECO:0000303" key="7">
    <source>
    </source>
</evidence>
<evidence type="ECO:0000303" key="8">
    <source>
    </source>
</evidence>
<evidence type="ECO:0000305" key="9"/>
<evidence type="ECO:0000305" key="10">
    <source>
    </source>
</evidence>
<evidence type="ECO:0000312" key="11">
    <source>
        <dbReference type="HGNC" id="HGNC:26509"/>
    </source>
</evidence>
<evidence type="ECO:0007744" key="12">
    <source>
    </source>
</evidence>
<evidence type="ECO:0007829" key="13">
    <source>
        <dbReference type="PDB" id="3QIS"/>
    </source>
</evidence>
<name>SESQ1_HUMAN</name>
<comment type="function">
    <text evidence="5">Plays a role in endocytic trafficking. Required for receptor recycling from endosomes, both to the trans-Golgi network and the plasma membrane.</text>
</comment>
<comment type="subunit">
    <text evidence="1 4 5 6">Forms homodimers and heterodimers with PHETA2 (PubMed:21233288). Interacts with OCRL and INPP5B (PubMed:20133602, PubMed:21233288, PubMed:21666675). Interaction with OCRL may be important for endosomal morphology and function (By similarity).</text>
</comment>
<comment type="interaction">
    <interactant intactId="EBI-7310488">
        <id>Q8N4B1</id>
    </interactant>
    <interactant intactId="EBI-6148898">
        <id>Q01968</id>
        <label>OCRL</label>
    </interactant>
    <organismsDiffer>false</organismsDiffer>
    <experiments>5</experiments>
</comment>
<comment type="interaction">
    <interactant intactId="EBI-7310488">
        <id>Q8N4B1</id>
    </interactant>
    <interactant intactId="EBI-1057560">
        <id>Q9NW61</id>
        <label>PLEKHJ1</label>
    </interactant>
    <organismsDiffer>false</organismsDiffer>
    <experiments>5</experiments>
</comment>
<comment type="interaction">
    <interactant intactId="EBI-14131832">
        <id>Q8N4B1-4</id>
    </interactant>
    <interactant intactId="EBI-11096309">
        <id>Q9NYB9-2</id>
        <label>ABI2</label>
    </interactant>
    <organismsDiffer>false</organismsDiffer>
    <experiments>8</experiments>
</comment>
<comment type="interaction">
    <interactant intactId="EBI-14131832">
        <id>Q8N4B1-4</id>
    </interactant>
    <interactant intactId="EBI-12002214">
        <id>Q9H3H3-3</id>
        <label>C11orf68</label>
    </interactant>
    <organismsDiffer>false</organismsDiffer>
    <experiments>3</experiments>
</comment>
<comment type="interaction">
    <interactant intactId="EBI-14131832">
        <id>Q8N4B1-4</id>
    </interactant>
    <interactant intactId="EBI-3867333">
        <id>A8MQ03</id>
        <label>CYSRT1</label>
    </interactant>
    <organismsDiffer>false</organismsDiffer>
    <experiments>3</experiments>
</comment>
<comment type="interaction">
    <interactant intactId="EBI-14131832">
        <id>Q8N4B1-4</id>
    </interactant>
    <interactant intactId="EBI-11977403">
        <id>A0A0C3SFZ9</id>
        <label>FCHO1</label>
    </interactant>
    <organismsDiffer>false</organismsDiffer>
    <experiments>3</experiments>
</comment>
<comment type="interaction">
    <interactant intactId="EBI-14131832">
        <id>Q8N4B1-4</id>
    </interactant>
    <interactant intactId="EBI-401755">
        <id>P62993</id>
        <label>GRB2</label>
    </interactant>
    <organismsDiffer>false</organismsDiffer>
    <experiments>3</experiments>
</comment>
<comment type="interaction">
    <interactant intactId="EBI-14131832">
        <id>Q8N4B1-4</id>
    </interactant>
    <interactant intactId="EBI-740785">
        <id>P49639</id>
        <label>HOXA1</label>
    </interactant>
    <organismsDiffer>false</organismsDiffer>
    <experiments>3</experiments>
</comment>
<comment type="interaction">
    <interactant intactId="EBI-14131832">
        <id>Q8N4B1-4</id>
    </interactant>
    <interactant intactId="EBI-11749135">
        <id>Q8IUG1</id>
        <label>KRTAP1-3</label>
    </interactant>
    <organismsDiffer>false</organismsDiffer>
    <experiments>3</experiments>
</comment>
<comment type="interaction">
    <interactant intactId="EBI-14131832">
        <id>Q8N4B1-4</id>
    </interactant>
    <interactant intactId="EBI-11953846">
        <id>Q52LG2</id>
        <label>KRTAP13-2</label>
    </interactant>
    <organismsDiffer>false</organismsDiffer>
    <experiments>3</experiments>
</comment>
<comment type="interaction">
    <interactant intactId="EBI-14131832">
        <id>Q8N4B1-4</id>
    </interactant>
    <interactant intactId="EBI-22311199">
        <id>Q3LI67</id>
        <label>KRTAP6-3</label>
    </interactant>
    <organismsDiffer>false</organismsDiffer>
    <experiments>3</experiments>
</comment>
<comment type="interaction">
    <interactant intactId="EBI-14131832">
        <id>Q8N4B1-4</id>
    </interactant>
    <interactant intactId="EBI-713635">
        <id>O43639</id>
        <label>NCK2</label>
    </interactant>
    <organismsDiffer>false</organismsDiffer>
    <experiments>3</experiments>
</comment>
<comment type="interaction">
    <interactant intactId="EBI-14131832">
        <id>Q8N4B1-4</id>
    </interactant>
    <interactant intactId="EBI-11749425">
        <id>Q01968-2</id>
        <label>OCRL</label>
    </interactant>
    <organismsDiffer>false</organismsDiffer>
    <experiments>3</experiments>
</comment>
<comment type="interaction">
    <interactant intactId="EBI-14131832">
        <id>Q8N4B1-4</id>
    </interactant>
    <interactant intactId="EBI-536879">
        <id>O43482</id>
        <label>OIP5</label>
    </interactant>
    <organismsDiffer>false</organismsDiffer>
    <experiments>3</experiments>
</comment>
<comment type="interaction">
    <interactant intactId="EBI-14131832">
        <id>Q8N4B1-4</id>
    </interactant>
    <interactant intactId="EBI-11081747">
        <id>Q6ICB4</id>
        <label>PHETA2</label>
    </interactant>
    <organismsDiffer>false</organismsDiffer>
    <experiments>5</experiments>
</comment>
<comment type="interaction">
    <interactant intactId="EBI-14131832">
        <id>Q8N4B1-4</id>
    </interactant>
    <interactant intactId="EBI-1057560">
        <id>Q9NW61</id>
        <label>PLEKHJ1</label>
    </interactant>
    <organismsDiffer>false</organismsDiffer>
    <experiments>3</experiments>
</comment>
<comment type="interaction">
    <interactant intactId="EBI-14131832">
        <id>Q8N4B1-4</id>
    </interactant>
    <interactant intactId="EBI-741237">
        <id>O60504</id>
        <label>SORBS3</label>
    </interactant>
    <organismsDiffer>false</organismsDiffer>
    <experiments>3</experiments>
</comment>
<comment type="subcellular location">
    <subcellularLocation>
        <location evidence="5">Early endosome</location>
    </subcellularLocation>
    <subcellularLocation>
        <location evidence="5">Recycling endosome</location>
    </subcellularLocation>
    <subcellularLocation>
        <location evidence="5">Golgi apparatus</location>
        <location evidence="5">trans-Golgi network</location>
    </subcellularLocation>
    <subcellularLocation>
        <location evidence="5">Cytoplasmic vesicle</location>
        <location evidence="5">Clathrin-coated vesicle</location>
    </subcellularLocation>
    <text evidence="4 5">Interaction with OCRL may be crucial for targeting to endosome and to the trans-Golgi network. Also found on macropinosomes. Not detected in late endosomes, nor in lysosomes.</text>
</comment>
<comment type="alternative products">
    <event type="alternative splicing"/>
    <isoform>
        <id>Q8N4B1-1</id>
        <name>1</name>
        <sequence type="displayed"/>
    </isoform>
    <isoform>
        <id>Q8N4B1-2</id>
        <name>2</name>
        <sequence type="described" ref="VSP_021239 VSP_021240"/>
    </isoform>
    <isoform>
        <id>Q8N4B1-3</id>
        <name>3</name>
        <sequence type="described" ref="VSP_021241 VSP_021242"/>
    </isoform>
    <isoform>
        <id>Q8N4B1-4</id>
        <name>4</name>
        <sequence type="described" ref="VSP_044836"/>
    </isoform>
</comment>
<comment type="domain">
    <text evidence="6">The F&amp;H motif, an approximately 12-13 amino-acid sequence centered around Phe and His residues, is essential for binding to OCRL and INPP5B.</text>
</comment>
<comment type="miscellaneous">
    <text evidence="10">Was named after 'sesquipedalian', an unnecessarily long description of a simple thing.</text>
</comment>
<comment type="similarity">
    <text evidence="9">Belongs to the sesquipedalian family.</text>
</comment>
<reference key="1">
    <citation type="journal article" date="2004" name="Nat. Genet.">
        <title>Complete sequencing and characterization of 21,243 full-length human cDNAs.</title>
        <authorList>
            <person name="Ota T."/>
            <person name="Suzuki Y."/>
            <person name="Nishikawa T."/>
            <person name="Otsuki T."/>
            <person name="Sugiyama T."/>
            <person name="Irie R."/>
            <person name="Wakamatsu A."/>
            <person name="Hayashi K."/>
            <person name="Sato H."/>
            <person name="Nagai K."/>
            <person name="Kimura K."/>
            <person name="Makita H."/>
            <person name="Sekine M."/>
            <person name="Obayashi M."/>
            <person name="Nishi T."/>
            <person name="Shibahara T."/>
            <person name="Tanaka T."/>
            <person name="Ishii S."/>
            <person name="Yamamoto J."/>
            <person name="Saito K."/>
            <person name="Kawai Y."/>
            <person name="Isono Y."/>
            <person name="Nakamura Y."/>
            <person name="Nagahari K."/>
            <person name="Murakami K."/>
            <person name="Yasuda T."/>
            <person name="Iwayanagi T."/>
            <person name="Wagatsuma M."/>
            <person name="Shiratori A."/>
            <person name="Sudo H."/>
            <person name="Hosoiri T."/>
            <person name="Kaku Y."/>
            <person name="Kodaira H."/>
            <person name="Kondo H."/>
            <person name="Sugawara M."/>
            <person name="Takahashi M."/>
            <person name="Kanda K."/>
            <person name="Yokoi T."/>
            <person name="Furuya T."/>
            <person name="Kikkawa E."/>
            <person name="Omura Y."/>
            <person name="Abe K."/>
            <person name="Kamihara K."/>
            <person name="Katsuta N."/>
            <person name="Sato K."/>
            <person name="Tanikawa M."/>
            <person name="Yamazaki M."/>
            <person name="Ninomiya K."/>
            <person name="Ishibashi T."/>
            <person name="Yamashita H."/>
            <person name="Murakawa K."/>
            <person name="Fujimori K."/>
            <person name="Tanai H."/>
            <person name="Kimata M."/>
            <person name="Watanabe M."/>
            <person name="Hiraoka S."/>
            <person name="Chiba Y."/>
            <person name="Ishida S."/>
            <person name="Ono Y."/>
            <person name="Takiguchi S."/>
            <person name="Watanabe S."/>
            <person name="Yosida M."/>
            <person name="Hotuta T."/>
            <person name="Kusano J."/>
            <person name="Kanehori K."/>
            <person name="Takahashi-Fujii A."/>
            <person name="Hara H."/>
            <person name="Tanase T.-O."/>
            <person name="Nomura Y."/>
            <person name="Togiya S."/>
            <person name="Komai F."/>
            <person name="Hara R."/>
            <person name="Takeuchi K."/>
            <person name="Arita M."/>
            <person name="Imose N."/>
            <person name="Musashino K."/>
            <person name="Yuuki H."/>
            <person name="Oshima A."/>
            <person name="Sasaki N."/>
            <person name="Aotsuka S."/>
            <person name="Yoshikawa Y."/>
            <person name="Matsunawa H."/>
            <person name="Ichihara T."/>
            <person name="Shiohata N."/>
            <person name="Sano S."/>
            <person name="Moriya S."/>
            <person name="Momiyama H."/>
            <person name="Satoh N."/>
            <person name="Takami S."/>
            <person name="Terashima Y."/>
            <person name="Suzuki O."/>
            <person name="Nakagawa S."/>
            <person name="Senoh A."/>
            <person name="Mizoguchi H."/>
            <person name="Goto Y."/>
            <person name="Shimizu F."/>
            <person name="Wakebe H."/>
            <person name="Hishigaki H."/>
            <person name="Watanabe T."/>
            <person name="Sugiyama A."/>
            <person name="Takemoto M."/>
            <person name="Kawakami B."/>
            <person name="Yamazaki M."/>
            <person name="Watanabe K."/>
            <person name="Kumagai A."/>
            <person name="Itakura S."/>
            <person name="Fukuzumi Y."/>
            <person name="Fujimori Y."/>
            <person name="Komiyama M."/>
            <person name="Tashiro H."/>
            <person name="Tanigami A."/>
            <person name="Fujiwara T."/>
            <person name="Ono T."/>
            <person name="Yamada K."/>
            <person name="Fujii Y."/>
            <person name="Ozaki K."/>
            <person name="Hirao M."/>
            <person name="Ohmori Y."/>
            <person name="Kawabata A."/>
            <person name="Hikiji T."/>
            <person name="Kobatake N."/>
            <person name="Inagaki H."/>
            <person name="Ikema Y."/>
            <person name="Okamoto S."/>
            <person name="Okitani R."/>
            <person name="Kawakami T."/>
            <person name="Noguchi S."/>
            <person name="Itoh T."/>
            <person name="Shigeta K."/>
            <person name="Senba T."/>
            <person name="Matsumura K."/>
            <person name="Nakajima Y."/>
            <person name="Mizuno T."/>
            <person name="Morinaga M."/>
            <person name="Sasaki M."/>
            <person name="Togashi T."/>
            <person name="Oyama M."/>
            <person name="Hata H."/>
            <person name="Watanabe M."/>
            <person name="Komatsu T."/>
            <person name="Mizushima-Sugano J."/>
            <person name="Satoh T."/>
            <person name="Shirai Y."/>
            <person name="Takahashi Y."/>
            <person name="Nakagawa K."/>
            <person name="Okumura K."/>
            <person name="Nagase T."/>
            <person name="Nomura N."/>
            <person name="Kikuchi H."/>
            <person name="Masuho Y."/>
            <person name="Yamashita R."/>
            <person name="Nakai K."/>
            <person name="Yada T."/>
            <person name="Nakamura Y."/>
            <person name="Ohara O."/>
            <person name="Isogai T."/>
            <person name="Sugano S."/>
        </authorList>
    </citation>
    <scope>NUCLEOTIDE SEQUENCE [LARGE SCALE MRNA] (ISOFORM 2)</scope>
    <source>
        <tissue>Prostate</tissue>
    </source>
</reference>
<reference key="2">
    <citation type="journal article" date="2006" name="Nature">
        <title>The finished DNA sequence of human chromosome 12.</title>
        <authorList>
            <person name="Scherer S.E."/>
            <person name="Muzny D.M."/>
            <person name="Buhay C.J."/>
            <person name="Chen R."/>
            <person name="Cree A."/>
            <person name="Ding Y."/>
            <person name="Dugan-Rocha S."/>
            <person name="Gill R."/>
            <person name="Gunaratne P."/>
            <person name="Harris R.A."/>
            <person name="Hawes A.C."/>
            <person name="Hernandez J."/>
            <person name="Hodgson A.V."/>
            <person name="Hume J."/>
            <person name="Jackson A."/>
            <person name="Khan Z.M."/>
            <person name="Kovar-Smith C."/>
            <person name="Lewis L.R."/>
            <person name="Lozado R.J."/>
            <person name="Metzker M.L."/>
            <person name="Milosavljevic A."/>
            <person name="Miner G.R."/>
            <person name="Montgomery K.T."/>
            <person name="Morgan M.B."/>
            <person name="Nazareth L.V."/>
            <person name="Scott G."/>
            <person name="Sodergren E."/>
            <person name="Song X.-Z."/>
            <person name="Steffen D."/>
            <person name="Lovering R.C."/>
            <person name="Wheeler D.A."/>
            <person name="Worley K.C."/>
            <person name="Yuan Y."/>
            <person name="Zhang Z."/>
            <person name="Adams C.Q."/>
            <person name="Ansari-Lari M.A."/>
            <person name="Ayele M."/>
            <person name="Brown M.J."/>
            <person name="Chen G."/>
            <person name="Chen Z."/>
            <person name="Clerc-Blankenburg K.P."/>
            <person name="Davis C."/>
            <person name="Delgado O."/>
            <person name="Dinh H.H."/>
            <person name="Draper H."/>
            <person name="Gonzalez-Garay M.L."/>
            <person name="Havlak P."/>
            <person name="Jackson L.R."/>
            <person name="Jacob L.S."/>
            <person name="Kelly S.H."/>
            <person name="Li L."/>
            <person name="Li Z."/>
            <person name="Liu J."/>
            <person name="Liu W."/>
            <person name="Lu J."/>
            <person name="Maheshwari M."/>
            <person name="Nguyen B.-V."/>
            <person name="Okwuonu G.O."/>
            <person name="Pasternak S."/>
            <person name="Perez L.M."/>
            <person name="Plopper F.J.H."/>
            <person name="Santibanez J."/>
            <person name="Shen H."/>
            <person name="Tabor P.E."/>
            <person name="Verduzco D."/>
            <person name="Waldron L."/>
            <person name="Wang Q."/>
            <person name="Williams G.A."/>
            <person name="Zhang J."/>
            <person name="Zhou J."/>
            <person name="Allen C.C."/>
            <person name="Amin A.G."/>
            <person name="Anyalebechi V."/>
            <person name="Bailey M."/>
            <person name="Barbaria J.A."/>
            <person name="Bimage K.E."/>
            <person name="Bryant N.P."/>
            <person name="Burch P.E."/>
            <person name="Burkett C.E."/>
            <person name="Burrell K.L."/>
            <person name="Calderon E."/>
            <person name="Cardenas V."/>
            <person name="Carter K."/>
            <person name="Casias K."/>
            <person name="Cavazos I."/>
            <person name="Cavazos S.R."/>
            <person name="Ceasar H."/>
            <person name="Chacko J."/>
            <person name="Chan S.N."/>
            <person name="Chavez D."/>
            <person name="Christopoulos C."/>
            <person name="Chu J."/>
            <person name="Cockrell R."/>
            <person name="Cox C.D."/>
            <person name="Dang M."/>
            <person name="Dathorne S.R."/>
            <person name="David R."/>
            <person name="Davis C.M."/>
            <person name="Davy-Carroll L."/>
            <person name="Deshazo D.R."/>
            <person name="Donlin J.E."/>
            <person name="D'Souza L."/>
            <person name="Eaves K.A."/>
            <person name="Egan A."/>
            <person name="Emery-Cohen A.J."/>
            <person name="Escotto M."/>
            <person name="Flagg N."/>
            <person name="Forbes L.D."/>
            <person name="Gabisi A.M."/>
            <person name="Garza M."/>
            <person name="Hamilton C."/>
            <person name="Henderson N."/>
            <person name="Hernandez O."/>
            <person name="Hines S."/>
            <person name="Hogues M.E."/>
            <person name="Huang M."/>
            <person name="Idlebird D.G."/>
            <person name="Johnson R."/>
            <person name="Jolivet A."/>
            <person name="Jones S."/>
            <person name="Kagan R."/>
            <person name="King L.M."/>
            <person name="Leal B."/>
            <person name="Lebow H."/>
            <person name="Lee S."/>
            <person name="LeVan J.M."/>
            <person name="Lewis L.C."/>
            <person name="London P."/>
            <person name="Lorensuhewa L.M."/>
            <person name="Loulseged H."/>
            <person name="Lovett D.A."/>
            <person name="Lucier A."/>
            <person name="Lucier R.L."/>
            <person name="Ma J."/>
            <person name="Madu R.C."/>
            <person name="Mapua P."/>
            <person name="Martindale A.D."/>
            <person name="Martinez E."/>
            <person name="Massey E."/>
            <person name="Mawhiney S."/>
            <person name="Meador M.G."/>
            <person name="Mendez S."/>
            <person name="Mercado C."/>
            <person name="Mercado I.C."/>
            <person name="Merritt C.E."/>
            <person name="Miner Z.L."/>
            <person name="Minja E."/>
            <person name="Mitchell T."/>
            <person name="Mohabbat F."/>
            <person name="Mohabbat K."/>
            <person name="Montgomery B."/>
            <person name="Moore N."/>
            <person name="Morris S."/>
            <person name="Munidasa M."/>
            <person name="Ngo R.N."/>
            <person name="Nguyen N.B."/>
            <person name="Nickerson E."/>
            <person name="Nwaokelemeh O.O."/>
            <person name="Nwokenkwo S."/>
            <person name="Obregon M."/>
            <person name="Oguh M."/>
            <person name="Oragunye N."/>
            <person name="Oviedo R.J."/>
            <person name="Parish B.J."/>
            <person name="Parker D.N."/>
            <person name="Parrish J."/>
            <person name="Parks K.L."/>
            <person name="Paul H.A."/>
            <person name="Payton B.A."/>
            <person name="Perez A."/>
            <person name="Perrin W."/>
            <person name="Pickens A."/>
            <person name="Primus E.L."/>
            <person name="Pu L.-L."/>
            <person name="Puazo M."/>
            <person name="Quiles M.M."/>
            <person name="Quiroz J.B."/>
            <person name="Rabata D."/>
            <person name="Reeves K."/>
            <person name="Ruiz S.J."/>
            <person name="Shao H."/>
            <person name="Sisson I."/>
            <person name="Sonaike T."/>
            <person name="Sorelle R.P."/>
            <person name="Sutton A.E."/>
            <person name="Svatek A.F."/>
            <person name="Svetz L.A."/>
            <person name="Tamerisa K.S."/>
            <person name="Taylor T.R."/>
            <person name="Teague B."/>
            <person name="Thomas N."/>
            <person name="Thorn R.D."/>
            <person name="Trejos Z.Y."/>
            <person name="Trevino B.K."/>
            <person name="Ukegbu O.N."/>
            <person name="Urban J.B."/>
            <person name="Vasquez L.I."/>
            <person name="Vera V.A."/>
            <person name="Villasana D.M."/>
            <person name="Wang L."/>
            <person name="Ward-Moore S."/>
            <person name="Warren J.T."/>
            <person name="Wei X."/>
            <person name="White F."/>
            <person name="Williamson A.L."/>
            <person name="Wleczyk R."/>
            <person name="Wooden H.S."/>
            <person name="Wooden S.H."/>
            <person name="Yen J."/>
            <person name="Yoon L."/>
            <person name="Yoon V."/>
            <person name="Zorrilla S.E."/>
            <person name="Nelson D."/>
            <person name="Kucherlapati R."/>
            <person name="Weinstock G."/>
            <person name="Gibbs R.A."/>
        </authorList>
    </citation>
    <scope>NUCLEOTIDE SEQUENCE [LARGE SCALE GENOMIC DNA]</scope>
</reference>
<reference key="3">
    <citation type="journal article" date="2004" name="Genome Res.">
        <title>The status, quality, and expansion of the NIH full-length cDNA project: the Mammalian Gene Collection (MGC).</title>
        <authorList>
            <consortium name="The MGC Project Team"/>
        </authorList>
    </citation>
    <scope>NUCLEOTIDE SEQUENCE [LARGE SCALE MRNA] (ISOFORMS 1 AND 3)</scope>
    <scope>NUCLEOTIDE SEQUENCE [LARGE SCALE MRNA] OF 1-80 (ISOFORM 4)</scope>
    <source>
        <tissue>Brain</tissue>
    </source>
</reference>
<reference key="4">
    <citation type="journal article" date="2010" name="Proc. Natl. Acad. Sci. U.S.A.">
        <title>Two closely related endocytic proteins that share a common OCRL-binding motif with APPL1.</title>
        <authorList>
            <person name="Swan L.E."/>
            <person name="Tomasini L."/>
            <person name="Pirruccello M."/>
            <person name="Lunardi J."/>
            <person name="De Camilli P."/>
        </authorList>
    </citation>
    <scope>INTERACTION WITH OCRL AND INPP5B</scope>
    <scope>SUBCELLULAR LOCATION</scope>
    <scope>F&amp;H MOTIF</scope>
    <scope>MUTAGENESIS OF PHE-224 AND HIS-228</scope>
</reference>
<reference key="5">
    <citation type="journal article" date="2011" name="Mol. Biol. Cell">
        <title>The PH domain proteins IPIP27A and B link OCRL1 to receptor recycling in the endocytic pathway.</title>
        <authorList>
            <person name="Noakes C.J."/>
            <person name="Lee G."/>
            <person name="Lowe M."/>
        </authorList>
    </citation>
    <scope>FUNCTION</scope>
    <scope>INTERACTION WITH OCRL AND INPP5B</scope>
    <scope>SUBUNIT</scope>
    <scope>SUBCELLULAR LOCATION</scope>
    <scope>MUTAGENESIS OF PHE-224; HIS-228 AND 234-GLU-ILE-235</scope>
</reference>
<reference key="6">
    <citation type="journal article" date="2013" name="J. Proteome Res.">
        <title>Toward a comprehensive characterization of a human cancer cell phosphoproteome.</title>
        <authorList>
            <person name="Zhou H."/>
            <person name="Di Palma S."/>
            <person name="Preisinger C."/>
            <person name="Peng M."/>
            <person name="Polat A.N."/>
            <person name="Heck A.J."/>
            <person name="Mohammed S."/>
        </authorList>
    </citation>
    <scope>PHOSPHORYLATION [LARGE SCALE ANALYSIS] AT SER-213</scope>
    <scope>IDENTIFICATION BY MASS SPECTROMETRY [LARGE SCALE ANALYSIS]</scope>
    <source>
        <tissue>Erythroleukemia</tissue>
    </source>
</reference>
<reference key="7">
    <citation type="journal article" date="2011" name="Nat. Struct. Mol. Biol.">
        <title>Recognition of the F&amp;H motif by the Lowe syndrome protein OCRL.</title>
        <authorList>
            <person name="Pirruccello M."/>
            <person name="Swan L.E."/>
            <person name="Folta-Stogniew E."/>
            <person name="De Camilli P."/>
        </authorList>
    </citation>
    <scope>X-RAY CRYSTALLOGRAPHY (2.3 ANGSTROMS) OF 223-235 IN COMPLEX WITH OCRL</scope>
    <scope>F&amp;H MOTIF</scope>
</reference>
<accession>Q8N4B1</accession>
<accession>J3KP50</accession>
<accession>Q6PJL9</accession>
<accession>Q96MH8</accession>